<gene>
    <name evidence="1" type="primary">ygiB</name>
    <name type="ordered locus">SSPA2852</name>
</gene>
<name>YGIB_SALPK</name>
<comment type="similarity">
    <text evidence="1">Belongs to the UPF0441 family.</text>
</comment>
<dbReference type="EMBL" id="FM200053">
    <property type="protein sequence ID" value="CAR61099.1"/>
    <property type="molecule type" value="Genomic_DNA"/>
</dbReference>
<dbReference type="RefSeq" id="WP_000831524.1">
    <property type="nucleotide sequence ID" value="NC_011147.1"/>
</dbReference>
<dbReference type="KEGG" id="sek:SSPA2852"/>
<dbReference type="HOGENOM" id="CLU_095624_0_0_6"/>
<dbReference type="Proteomes" id="UP000001869">
    <property type="component" value="Chromosome"/>
</dbReference>
<dbReference type="HAMAP" id="MF_01188">
    <property type="entry name" value="UPF0441"/>
    <property type="match status" value="1"/>
</dbReference>
<dbReference type="InterPro" id="IPR009576">
    <property type="entry name" value="Biofilm_formation_YgiB"/>
</dbReference>
<dbReference type="NCBIfam" id="NF008655">
    <property type="entry name" value="PRK11653.1"/>
    <property type="match status" value="1"/>
</dbReference>
<dbReference type="Pfam" id="PF06693">
    <property type="entry name" value="DUF1190"/>
    <property type="match status" value="1"/>
</dbReference>
<accession>B5BFZ9</accession>
<feature type="chain" id="PRO_1000138353" description="UPF0441 protein YgiB">
    <location>
        <begin position="1"/>
        <end position="223"/>
    </location>
</feature>
<feature type="region of interest" description="Disordered" evidence="2">
    <location>
        <begin position="178"/>
        <end position="223"/>
    </location>
</feature>
<feature type="compositionally biased region" description="Low complexity" evidence="2">
    <location>
        <begin position="178"/>
        <end position="195"/>
    </location>
</feature>
<feature type="compositionally biased region" description="Polar residues" evidence="2">
    <location>
        <begin position="204"/>
        <end position="223"/>
    </location>
</feature>
<protein>
    <recommendedName>
        <fullName evidence="1">UPF0441 protein YgiB</fullName>
    </recommendedName>
</protein>
<evidence type="ECO:0000255" key="1">
    <source>
        <dbReference type="HAMAP-Rule" id="MF_01188"/>
    </source>
</evidence>
<evidence type="ECO:0000256" key="2">
    <source>
        <dbReference type="SAM" id="MobiDB-lite"/>
    </source>
</evidence>
<reference key="1">
    <citation type="journal article" date="2009" name="BMC Genomics">
        <title>Pseudogene accumulation in the evolutionary histories of Salmonella enterica serovars Paratyphi A and Typhi.</title>
        <authorList>
            <person name="Holt K.E."/>
            <person name="Thomson N.R."/>
            <person name="Wain J."/>
            <person name="Langridge G.C."/>
            <person name="Hasan R."/>
            <person name="Bhutta Z.A."/>
            <person name="Quail M.A."/>
            <person name="Norbertczak H."/>
            <person name="Walker D."/>
            <person name="Simmonds M."/>
            <person name="White B."/>
            <person name="Bason N."/>
            <person name="Mungall K."/>
            <person name="Dougan G."/>
            <person name="Parkhill J."/>
        </authorList>
    </citation>
    <scope>NUCLEOTIDE SEQUENCE [LARGE SCALE GENOMIC DNA]</scope>
    <source>
        <strain>AKU_12601</strain>
    </source>
</reference>
<sequence>MKRTKSIHHASFRKSWSARHLTPVALAVTAVFMLAGCEKSDETVSLYQNADDCSAANPGKSAECTAAYNNALKEAERTAPKYATREDCVAEFGEGQCQQAPAQAGMAPENQAQAQQSSGSFWMPLMAGYMMGRLMGGGAGFAQQPLFSSKNPASPAYGKYTDAAGKNYGAAQPGRTMTVPKTAMAPKPATTTTVTRGGFGESVAKQSTMQRSAAGTSTRSMGG</sequence>
<organism>
    <name type="scientific">Salmonella paratyphi A (strain AKU_12601)</name>
    <dbReference type="NCBI Taxonomy" id="554290"/>
    <lineage>
        <taxon>Bacteria</taxon>
        <taxon>Pseudomonadati</taxon>
        <taxon>Pseudomonadota</taxon>
        <taxon>Gammaproteobacteria</taxon>
        <taxon>Enterobacterales</taxon>
        <taxon>Enterobacteriaceae</taxon>
        <taxon>Salmonella</taxon>
    </lineage>
</organism>
<proteinExistence type="inferred from homology"/>